<keyword id="KW-0007">Acetylation</keyword>
<keyword id="KW-0158">Chromosome</keyword>
<keyword id="KW-0238">DNA-binding</keyword>
<keyword id="KW-0488">Methylation</keyword>
<keyword id="KW-0544">Nucleosome core</keyword>
<keyword id="KW-0539">Nucleus</keyword>
<keyword id="KW-0597">Phosphoprotein</keyword>
<keyword id="KW-1185">Reference proteome</keyword>
<reference key="1">
    <citation type="online journal article" date="1997" name="Plant Gene Register">
        <title>cDNA clones encoding histone H3 and histone H2B from upland cotton (Gossypium hirsutum L.).</title>
        <authorList>
            <person name="Turley R.B."/>
        </authorList>
        <locator>PGR97-182</locator>
    </citation>
    <scope>NUCLEOTIDE SEQUENCE [MRNA]</scope>
    <source>
        <strain>cv. Deltapine 62</strain>
        <tissue>Etiolated cotyledon</tissue>
    </source>
</reference>
<protein>
    <recommendedName>
        <fullName>Histone H3.3</fullName>
    </recommendedName>
</protein>
<sequence>MARTKQTARKSTGGKAPRKQLATKAARKSAPTTGGVKKPHRYRPGTVALREIRKYQKSTELLIRKLPFQRLVREIAQDFKTDLRFQSHAVLALQEAAEAYLVGLFEDTNLCAIHAKRVTIMPKDIQLARRIRGERA</sequence>
<accession>Q71V89</accession>
<evidence type="ECO:0000250" key="1"/>
<evidence type="ECO:0000256" key="2">
    <source>
        <dbReference type="SAM" id="MobiDB-lite"/>
    </source>
</evidence>
<evidence type="ECO:0000305" key="3"/>
<gene>
    <name type="primary">HIS3</name>
</gene>
<feature type="initiator methionine" description="Removed" evidence="1">
    <location>
        <position position="1"/>
    </location>
</feature>
<feature type="chain" id="PRO_0000221276" description="Histone H3.3">
    <location>
        <begin position="2"/>
        <end position="136"/>
    </location>
</feature>
<feature type="region of interest" description="Disordered" evidence="2">
    <location>
        <begin position="1"/>
        <end position="43"/>
    </location>
</feature>
<feature type="modified residue" description="N6-methylated lysine" evidence="1">
    <location>
        <position position="5"/>
    </location>
</feature>
<feature type="modified residue" description="N6-acetyllysine; alternate" evidence="1">
    <location>
        <position position="10"/>
    </location>
</feature>
<feature type="modified residue" description="N6-methylated lysine; alternate" evidence="1">
    <location>
        <position position="10"/>
    </location>
</feature>
<feature type="modified residue" description="Phosphoserine" evidence="1">
    <location>
        <position position="11"/>
    </location>
</feature>
<feature type="modified residue" description="Phosphothreonine" evidence="1">
    <location>
        <position position="12"/>
    </location>
</feature>
<feature type="modified residue" description="N6-acetyllysine" evidence="1">
    <location>
        <position position="15"/>
    </location>
</feature>
<feature type="modified residue" description="N6-acetyllysine; alternate" evidence="1">
    <location>
        <position position="19"/>
    </location>
</feature>
<feature type="modified residue" description="N6-methylated lysine; alternate" evidence="1">
    <location>
        <position position="19"/>
    </location>
</feature>
<feature type="modified residue" description="N6-acetyllysine; alternate" evidence="1">
    <location>
        <position position="24"/>
    </location>
</feature>
<feature type="modified residue" description="N6-methylated lysine; alternate" evidence="1">
    <location>
        <position position="24"/>
    </location>
</feature>
<feature type="modified residue" description="N6-methylated lysine" evidence="1">
    <location>
        <position position="28"/>
    </location>
</feature>
<feature type="modified residue" description="Phosphoserine" evidence="1">
    <location>
        <position position="29"/>
    </location>
</feature>
<feature type="modified residue" description="N6-methylated lysine" evidence="1">
    <location>
        <position position="37"/>
    </location>
</feature>
<organism>
    <name type="scientific">Gossypium hirsutum</name>
    <name type="common">Upland cotton</name>
    <name type="synonym">Gossypium mexicanum</name>
    <dbReference type="NCBI Taxonomy" id="3635"/>
    <lineage>
        <taxon>Eukaryota</taxon>
        <taxon>Viridiplantae</taxon>
        <taxon>Streptophyta</taxon>
        <taxon>Embryophyta</taxon>
        <taxon>Tracheophyta</taxon>
        <taxon>Spermatophyta</taxon>
        <taxon>Magnoliopsida</taxon>
        <taxon>eudicotyledons</taxon>
        <taxon>Gunneridae</taxon>
        <taxon>Pentapetalae</taxon>
        <taxon>rosids</taxon>
        <taxon>malvids</taxon>
        <taxon>Malvales</taxon>
        <taxon>Malvaceae</taxon>
        <taxon>Malvoideae</taxon>
        <taxon>Gossypium</taxon>
    </lineage>
</organism>
<comment type="function">
    <text>Variant histone H3 which replaces conventional H3 in a wide range of nucleosomes in active genes. Constitutes the predominant form of histone H3 in non-dividing cells and is incorporated into chromatin independently of DNA synthesis. Deposited at sites of nucleosomal displacement throughout transcribed genes, suggesting that it represents an epigenetic imprint of transcriptionally active chromatin. Nucleosomes wrap and compact DNA into chromatin, limiting DNA accessibility to the cellular machineries which require DNA as a template. Histones thereby play a central role in transcription regulation, DNA repair, DNA replication and chromosomal stability. DNA accessibility is regulated via a complex set of post-translational modifications of histones, also called histone code, and nucleosome remodeling.</text>
</comment>
<comment type="subunit">
    <text>The nucleosome is a histone octamer containing two molecules each of H2A, H2B, H3 and H4 assembled in one H3-H4 heterotetramer and two H2A-H2B heterodimers. The octamer wraps approximately 147 bp of DNA.</text>
</comment>
<comment type="subcellular location">
    <subcellularLocation>
        <location evidence="1">Nucleus</location>
    </subcellularLocation>
    <subcellularLocation>
        <location evidence="1">Chromosome</location>
    </subcellularLocation>
</comment>
<comment type="PTM">
    <text evidence="1">Acetylation is generally linked to gene activation. Can be acetylated to form H3K9ac, H3K14ac, H3K18ac and H3K23ac. H3K9ac could compete with H3K9me and prevent gene silencing. H3K9ac is restricted to euchromatin (By similarity).</text>
</comment>
<comment type="PTM">
    <text evidence="1">Methylated to form mainly H3K4me, H3K9me, H3K18me, H3K23me, H3K27me and H3K36me. H3K4me1/2/3, H3K9me3, H3K27me3 and H3K36me1/2/3 are typical marks for euchromatin, whereas heterochromatic chromocenters are enriched in H3K9me1/2 and H3K27me1/2. H2BK143ub1 is probably prerequisite for H3K4me (By similarity).</text>
</comment>
<comment type="PTM">
    <text evidence="1">Can be phosphorylated to form H3S10ph, H3T11ph and H3S28ph.</text>
</comment>
<comment type="similarity">
    <text evidence="3">Belongs to the histone H3 family.</text>
</comment>
<comment type="caution">
    <text evidence="3">To ensure consistency between histone entries, we follow the 'Brno' nomenclature for histone modifications, with positions referring to those used in the literature for the 'closest' model organism. Due to slight variations in histone sequences between organisms and to the presence of initiator methionine in UniProtKB/Swiss-Prot sequences, the actual positions of modified amino acids in the sequence generally differ. In this entry the following conventions are used: H3K4me = methylated Lys-5; H3K9ac = acetylated Lys-10; H3K9me = methylated Lys-10; H3S10ph = phosphorylated Ser-11; H3T11ph = phosphorylated Thr-12; H3K14ac = acetylated Lys-15; H3K18ac = acetylated Lys-19; H3K18me = methylated Lys-19; H3K23ac = acetylated Lys-24; H3K23me = methylated Lys-24; H3K27me = methylated Lys-28; H3S28ph = phosphorylated Ser-29; H3K36me = methylated Lys-37.</text>
</comment>
<name>H33_GOSHI</name>
<dbReference type="EMBL" id="AF024716">
    <property type="protein sequence ID" value="AAB97162.1"/>
    <property type="molecule type" value="mRNA"/>
</dbReference>
<dbReference type="RefSeq" id="XP_016740763.1">
    <property type="nucleotide sequence ID" value="XM_016885274.1"/>
</dbReference>
<dbReference type="RefSeq" id="XP_016742364.1">
    <property type="nucleotide sequence ID" value="XM_016886875.1"/>
</dbReference>
<dbReference type="SMR" id="Q71V89"/>
<dbReference type="STRING" id="3635.Q71V89"/>
<dbReference type="PaxDb" id="3635-Q71V89"/>
<dbReference type="KEGG" id="ghi:107905089"/>
<dbReference type="KEGG" id="ghi:107910716"/>
<dbReference type="KEGG" id="ghi:107950429"/>
<dbReference type="KEGG" id="ghi:107950430"/>
<dbReference type="KEGG" id="ghi:107951105"/>
<dbReference type="KEGG" id="ghi:107951734"/>
<dbReference type="KEGG" id="ghi:107951735"/>
<dbReference type="KEGG" id="ghi:107957781"/>
<dbReference type="OrthoDB" id="80764at41938"/>
<dbReference type="Proteomes" id="UP000189702">
    <property type="component" value="Chromosome 7"/>
</dbReference>
<dbReference type="Proteomes" id="UP000189702">
    <property type="component" value="Chromosome 8"/>
</dbReference>
<dbReference type="GO" id="GO:0000786">
    <property type="term" value="C:nucleosome"/>
    <property type="evidence" value="ECO:0007669"/>
    <property type="project" value="UniProtKB-KW"/>
</dbReference>
<dbReference type="GO" id="GO:0005634">
    <property type="term" value="C:nucleus"/>
    <property type="evidence" value="ECO:0000318"/>
    <property type="project" value="GO_Central"/>
</dbReference>
<dbReference type="GO" id="GO:0003677">
    <property type="term" value="F:DNA binding"/>
    <property type="evidence" value="ECO:0007669"/>
    <property type="project" value="UniProtKB-KW"/>
</dbReference>
<dbReference type="GO" id="GO:0046982">
    <property type="term" value="F:protein heterodimerization activity"/>
    <property type="evidence" value="ECO:0007669"/>
    <property type="project" value="InterPro"/>
</dbReference>
<dbReference type="GO" id="GO:0030527">
    <property type="term" value="F:structural constituent of chromatin"/>
    <property type="evidence" value="ECO:0007669"/>
    <property type="project" value="InterPro"/>
</dbReference>
<dbReference type="CDD" id="cd22911">
    <property type="entry name" value="HFD_H3"/>
    <property type="match status" value="1"/>
</dbReference>
<dbReference type="FunFam" id="1.10.20.10:FF:000078">
    <property type="entry name" value="Histone H3"/>
    <property type="match status" value="1"/>
</dbReference>
<dbReference type="FunFam" id="1.10.20.10:FF:000044">
    <property type="entry name" value="Histone H3.3"/>
    <property type="match status" value="1"/>
</dbReference>
<dbReference type="Gene3D" id="1.10.20.10">
    <property type="entry name" value="Histone, subunit A"/>
    <property type="match status" value="1"/>
</dbReference>
<dbReference type="InterPro" id="IPR009072">
    <property type="entry name" value="Histone-fold"/>
</dbReference>
<dbReference type="InterPro" id="IPR007125">
    <property type="entry name" value="Histone_H2A/H2B/H3"/>
</dbReference>
<dbReference type="InterPro" id="IPR000164">
    <property type="entry name" value="Histone_H3/CENP-A"/>
</dbReference>
<dbReference type="PANTHER" id="PTHR11426">
    <property type="entry name" value="HISTONE H3"/>
    <property type="match status" value="1"/>
</dbReference>
<dbReference type="Pfam" id="PF00125">
    <property type="entry name" value="Histone"/>
    <property type="match status" value="1"/>
</dbReference>
<dbReference type="PRINTS" id="PR00622">
    <property type="entry name" value="HISTONEH3"/>
</dbReference>
<dbReference type="SMART" id="SM00428">
    <property type="entry name" value="H3"/>
    <property type="match status" value="1"/>
</dbReference>
<dbReference type="SUPFAM" id="SSF47113">
    <property type="entry name" value="Histone-fold"/>
    <property type="match status" value="1"/>
</dbReference>
<dbReference type="PROSITE" id="PS00322">
    <property type="entry name" value="HISTONE_H3_1"/>
    <property type="match status" value="1"/>
</dbReference>
<dbReference type="PROSITE" id="PS00959">
    <property type="entry name" value="HISTONE_H3_2"/>
    <property type="match status" value="1"/>
</dbReference>
<proteinExistence type="evidence at transcript level"/>